<evidence type="ECO:0000255" key="1">
    <source>
        <dbReference type="HAMAP-Rule" id="MF_00227"/>
    </source>
</evidence>
<gene>
    <name evidence="1" type="primary">rnpA</name>
    <name type="ordered locus">Acel_2160</name>
</gene>
<keyword id="KW-0255">Endonuclease</keyword>
<keyword id="KW-0378">Hydrolase</keyword>
<keyword id="KW-0540">Nuclease</keyword>
<keyword id="KW-1185">Reference proteome</keyword>
<keyword id="KW-0694">RNA-binding</keyword>
<keyword id="KW-0819">tRNA processing</keyword>
<sequence>MLPSRYRLRRSSDFKAVLRRGRRVAGRYIVVYLSTSDTDRPGPQAGFVVGRNVGGAVVRNRIRRRLRHIVAARLAVIPARKRIVVRALPAAAAASFAELAAEFDRLLGRLTQTKNSQGTS</sequence>
<proteinExistence type="inferred from homology"/>
<name>RNPA_ACIC1</name>
<feature type="chain" id="PRO_1000021369" description="Ribonuclease P protein component">
    <location>
        <begin position="1"/>
        <end position="120"/>
    </location>
</feature>
<comment type="function">
    <text evidence="1">RNaseP catalyzes the removal of the 5'-leader sequence from pre-tRNA to produce the mature 5'-terminus. It can also cleave other RNA substrates such as 4.5S RNA. The protein component plays an auxiliary but essential role in vivo by binding to the 5'-leader sequence and broadening the substrate specificity of the ribozyme.</text>
</comment>
<comment type="catalytic activity">
    <reaction evidence="1">
        <text>Endonucleolytic cleavage of RNA, removing 5'-extranucleotides from tRNA precursor.</text>
        <dbReference type="EC" id="3.1.26.5"/>
    </reaction>
</comment>
<comment type="subunit">
    <text evidence="1">Consists of a catalytic RNA component (M1 or rnpB) and a protein subunit.</text>
</comment>
<comment type="similarity">
    <text evidence="1">Belongs to the RnpA family.</text>
</comment>
<reference key="1">
    <citation type="journal article" date="2009" name="Genome Res.">
        <title>Complete genome of the cellulolytic thermophile Acidothermus cellulolyticus 11B provides insights into its ecophysiological and evolutionary adaptations.</title>
        <authorList>
            <person name="Barabote R.D."/>
            <person name="Xie G."/>
            <person name="Leu D.H."/>
            <person name="Normand P."/>
            <person name="Necsulea A."/>
            <person name="Daubin V."/>
            <person name="Medigue C."/>
            <person name="Adney W.S."/>
            <person name="Xu X.C."/>
            <person name="Lapidus A."/>
            <person name="Parales R.E."/>
            <person name="Detter C."/>
            <person name="Pujic P."/>
            <person name="Bruce D."/>
            <person name="Lavire C."/>
            <person name="Challacombe J.F."/>
            <person name="Brettin T.S."/>
            <person name="Berry A.M."/>
        </authorList>
    </citation>
    <scope>NUCLEOTIDE SEQUENCE [LARGE SCALE GENOMIC DNA]</scope>
    <source>
        <strain>ATCC 43068 / DSM 8971 / 11B</strain>
    </source>
</reference>
<dbReference type="EC" id="3.1.26.5" evidence="1"/>
<dbReference type="EMBL" id="CP000481">
    <property type="protein sequence ID" value="ABK53932.1"/>
    <property type="molecule type" value="Genomic_DNA"/>
</dbReference>
<dbReference type="RefSeq" id="WP_011720995.1">
    <property type="nucleotide sequence ID" value="NC_008578.1"/>
</dbReference>
<dbReference type="SMR" id="A0LWX2"/>
<dbReference type="FunCoup" id="A0LWX2">
    <property type="interactions" value="2"/>
</dbReference>
<dbReference type="STRING" id="351607.Acel_2160"/>
<dbReference type="KEGG" id="ace:Acel_2160"/>
<dbReference type="eggNOG" id="COG0594">
    <property type="taxonomic scope" value="Bacteria"/>
</dbReference>
<dbReference type="HOGENOM" id="CLU_117179_9_0_11"/>
<dbReference type="InParanoid" id="A0LWX2"/>
<dbReference type="Proteomes" id="UP000008221">
    <property type="component" value="Chromosome"/>
</dbReference>
<dbReference type="GO" id="GO:0030677">
    <property type="term" value="C:ribonuclease P complex"/>
    <property type="evidence" value="ECO:0007669"/>
    <property type="project" value="TreeGrafter"/>
</dbReference>
<dbReference type="GO" id="GO:0042781">
    <property type="term" value="F:3'-tRNA processing endoribonuclease activity"/>
    <property type="evidence" value="ECO:0007669"/>
    <property type="project" value="TreeGrafter"/>
</dbReference>
<dbReference type="GO" id="GO:0004526">
    <property type="term" value="F:ribonuclease P activity"/>
    <property type="evidence" value="ECO:0007669"/>
    <property type="project" value="UniProtKB-UniRule"/>
</dbReference>
<dbReference type="GO" id="GO:0000049">
    <property type="term" value="F:tRNA binding"/>
    <property type="evidence" value="ECO:0007669"/>
    <property type="project" value="UniProtKB-UniRule"/>
</dbReference>
<dbReference type="GO" id="GO:0001682">
    <property type="term" value="P:tRNA 5'-leader removal"/>
    <property type="evidence" value="ECO:0007669"/>
    <property type="project" value="UniProtKB-UniRule"/>
</dbReference>
<dbReference type="Gene3D" id="3.30.230.10">
    <property type="match status" value="1"/>
</dbReference>
<dbReference type="HAMAP" id="MF_00227">
    <property type="entry name" value="RNase_P"/>
    <property type="match status" value="1"/>
</dbReference>
<dbReference type="InterPro" id="IPR020568">
    <property type="entry name" value="Ribosomal_Su5_D2-typ_SF"/>
</dbReference>
<dbReference type="InterPro" id="IPR014721">
    <property type="entry name" value="Ribsml_uS5_D2-typ_fold_subgr"/>
</dbReference>
<dbReference type="InterPro" id="IPR000100">
    <property type="entry name" value="RNase_P"/>
</dbReference>
<dbReference type="InterPro" id="IPR020539">
    <property type="entry name" value="RNase_P_CS"/>
</dbReference>
<dbReference type="NCBIfam" id="TIGR00188">
    <property type="entry name" value="rnpA"/>
    <property type="match status" value="1"/>
</dbReference>
<dbReference type="PANTHER" id="PTHR33992">
    <property type="entry name" value="RIBONUCLEASE P PROTEIN COMPONENT"/>
    <property type="match status" value="1"/>
</dbReference>
<dbReference type="PANTHER" id="PTHR33992:SF1">
    <property type="entry name" value="RIBONUCLEASE P PROTEIN COMPONENT"/>
    <property type="match status" value="1"/>
</dbReference>
<dbReference type="Pfam" id="PF00825">
    <property type="entry name" value="Ribonuclease_P"/>
    <property type="match status" value="1"/>
</dbReference>
<dbReference type="SUPFAM" id="SSF54211">
    <property type="entry name" value="Ribosomal protein S5 domain 2-like"/>
    <property type="match status" value="1"/>
</dbReference>
<dbReference type="PROSITE" id="PS00648">
    <property type="entry name" value="RIBONUCLEASE_P"/>
    <property type="match status" value="1"/>
</dbReference>
<accession>A0LWX2</accession>
<protein>
    <recommendedName>
        <fullName evidence="1">Ribonuclease P protein component</fullName>
        <shortName evidence="1">RNase P protein</shortName>
        <shortName evidence="1">RNaseP protein</shortName>
        <ecNumber evidence="1">3.1.26.5</ecNumber>
    </recommendedName>
    <alternativeName>
        <fullName evidence="1">Protein C5</fullName>
    </alternativeName>
</protein>
<organism>
    <name type="scientific">Acidothermus cellulolyticus (strain ATCC 43068 / DSM 8971 / 11B)</name>
    <dbReference type="NCBI Taxonomy" id="351607"/>
    <lineage>
        <taxon>Bacteria</taxon>
        <taxon>Bacillati</taxon>
        <taxon>Actinomycetota</taxon>
        <taxon>Actinomycetes</taxon>
        <taxon>Acidothermales</taxon>
        <taxon>Acidothermaceae</taxon>
        <taxon>Acidothermus</taxon>
    </lineage>
</organism>